<keyword id="KW-0067">ATP-binding</keyword>
<keyword id="KW-0238">DNA-binding</keyword>
<keyword id="KW-0413">Isomerase</keyword>
<keyword id="KW-0547">Nucleotide-binding</keyword>
<keyword id="KW-0799">Topoisomerase</keyword>
<sequence>MAEARDLFKEFKVQSVSEFFRRNAAMLGYTGKIRSLTTIIHEAVTNSLDACEEAGILPYIRVEIEELGKEHYKVIVEDNGPGIPEEYIPHVFGKMLAGTKAHRNIQSRGQQGIGISGAVMFAQITSGKATRVITSTGGEIVEAWVKIDVQKNEGKIVKKLKHPNPKGWRGTRIELEVKDVKYVRSKQGVYWYLKLTAIANPHAHIELVEPDGKLVVFPRSSEDIPEPPVEMKPHPKGVMVDDVYTMAHRSKRSSVRRFLVSEFSRISDKKVDELIKYITALRLIKSETNKEVKEKLYEKLVSGDVDSVLRAFGRKWKKELEKVAKIMDKSPEKLTWHEAEEIVEAFKLMKFLAPPTHGLRPIGEENIKKGLTSILKPEFVTAVTRAPRVYAGGIPFQVEVGLAYGGQIQGSEILRYANRVPLLFDAGSCVITSAVRSIDWKRYKIDSFDSAPLVVLVNVVSVHVPYTSTGKQSIADIDEIHNEIRLALMDAARRLSFYLGGKFRRMYQVKRRKTLEKYLPEIARSLHILTGEPEEKIKEYFLKLIESKIEVEEVSEVEAEEAEA</sequence>
<evidence type="ECO:0000255" key="1">
    <source>
        <dbReference type="HAMAP-Rule" id="MF_00322"/>
    </source>
</evidence>
<protein>
    <recommendedName>
        <fullName evidence="1">Type 2 DNA topoisomerase 6 subunit B</fullName>
        <ecNumber evidence="1">5.6.2.2</ecNumber>
    </recommendedName>
    <alternativeName>
        <fullName evidence="1">Type II DNA topoisomerase VI subunit B</fullName>
        <shortName evidence="1">TopoVI-B</shortName>
    </alternativeName>
</protein>
<reference key="1">
    <citation type="journal article" date="2003" name="Mol. Microbiol.">
        <title>An integrated analysis of the genome of the hyperthermophilic archaeon Pyrococcus abyssi.</title>
        <authorList>
            <person name="Cohen G.N."/>
            <person name="Barbe V."/>
            <person name="Flament D."/>
            <person name="Galperin M."/>
            <person name="Heilig R."/>
            <person name="Lecompte O."/>
            <person name="Poch O."/>
            <person name="Prieur D."/>
            <person name="Querellou J."/>
            <person name="Ripp R."/>
            <person name="Thierry J.-C."/>
            <person name="Van der Oost J."/>
            <person name="Weissenbach J."/>
            <person name="Zivanovic Y."/>
            <person name="Forterre P."/>
        </authorList>
    </citation>
    <scope>NUCLEOTIDE SEQUENCE [LARGE SCALE GENOMIC DNA]</scope>
    <source>
        <strain>GE5 / Orsay</strain>
    </source>
</reference>
<reference key="2">
    <citation type="journal article" date="2012" name="Curr. Microbiol.">
        <title>Re-annotation of two hyperthermophilic archaea Pyrococcus abyssi GE5 and Pyrococcus furiosus DSM 3638.</title>
        <authorList>
            <person name="Gao J."/>
            <person name="Wang J."/>
        </authorList>
    </citation>
    <scope>GENOME REANNOTATION</scope>
    <source>
        <strain>GE5 / Orsay</strain>
    </source>
</reference>
<organism>
    <name type="scientific">Pyrococcus abyssi (strain GE5 / Orsay)</name>
    <dbReference type="NCBI Taxonomy" id="272844"/>
    <lineage>
        <taxon>Archaea</taxon>
        <taxon>Methanobacteriati</taxon>
        <taxon>Methanobacteriota</taxon>
        <taxon>Thermococci</taxon>
        <taxon>Thermococcales</taxon>
        <taxon>Thermococcaceae</taxon>
        <taxon>Pyrococcus</taxon>
    </lineage>
</organism>
<proteinExistence type="inferred from homology"/>
<dbReference type="EC" id="5.6.2.2" evidence="1"/>
<dbReference type="EMBL" id="AJ248284">
    <property type="protein sequence ID" value="CAB49516.1"/>
    <property type="molecule type" value="Genomic_DNA"/>
</dbReference>
<dbReference type="EMBL" id="HE613800">
    <property type="protein sequence ID" value="CCE69986.1"/>
    <property type="molecule type" value="Genomic_DNA"/>
</dbReference>
<dbReference type="PIR" id="E75179">
    <property type="entry name" value="E75179"/>
</dbReference>
<dbReference type="RefSeq" id="WP_010867718.1">
    <property type="nucleotide sequence ID" value="NC_000868.1"/>
</dbReference>
<dbReference type="SMR" id="Q9V135"/>
<dbReference type="IntAct" id="Q9V135">
    <property type="interactions" value="1"/>
</dbReference>
<dbReference type="MINT" id="Q9V135"/>
<dbReference type="STRING" id="272844.PAB0407"/>
<dbReference type="KEGG" id="pab:PAB0407"/>
<dbReference type="PATRIC" id="fig|272844.11.peg.632"/>
<dbReference type="eggNOG" id="arCOG01165">
    <property type="taxonomic scope" value="Archaea"/>
</dbReference>
<dbReference type="HOGENOM" id="CLU_006403_0_0_2"/>
<dbReference type="OrthoDB" id="65493at2157"/>
<dbReference type="PhylomeDB" id="Q9V135"/>
<dbReference type="Proteomes" id="UP000000810">
    <property type="component" value="Chromosome"/>
</dbReference>
<dbReference type="Proteomes" id="UP000009139">
    <property type="component" value="Chromosome"/>
</dbReference>
<dbReference type="GO" id="GO:0005524">
    <property type="term" value="F:ATP binding"/>
    <property type="evidence" value="ECO:0007669"/>
    <property type="project" value="UniProtKB-UniRule"/>
</dbReference>
<dbReference type="GO" id="GO:0003677">
    <property type="term" value="F:DNA binding"/>
    <property type="evidence" value="ECO:0007669"/>
    <property type="project" value="UniProtKB-UniRule"/>
</dbReference>
<dbReference type="GO" id="GO:0003918">
    <property type="term" value="F:DNA topoisomerase type II (double strand cut, ATP-hydrolyzing) activity"/>
    <property type="evidence" value="ECO:0007669"/>
    <property type="project" value="UniProtKB-UniRule"/>
</dbReference>
<dbReference type="GO" id="GO:0006265">
    <property type="term" value="P:DNA topological change"/>
    <property type="evidence" value="ECO:0007669"/>
    <property type="project" value="UniProtKB-UniRule"/>
</dbReference>
<dbReference type="CDD" id="cd16933">
    <property type="entry name" value="HATPase_TopVIB-like"/>
    <property type="match status" value="1"/>
</dbReference>
<dbReference type="CDD" id="cd00823">
    <property type="entry name" value="TopoIIB_Trans"/>
    <property type="match status" value="1"/>
</dbReference>
<dbReference type="FunFam" id="3.30.565.10:FF:000062">
    <property type="entry name" value="Type 2 DNA topoisomerase 6 subunit B"/>
    <property type="match status" value="1"/>
</dbReference>
<dbReference type="Gene3D" id="1.10.8.50">
    <property type="match status" value="1"/>
</dbReference>
<dbReference type="Gene3D" id="3.30.230.10">
    <property type="match status" value="1"/>
</dbReference>
<dbReference type="Gene3D" id="3.30.565.10">
    <property type="entry name" value="Histidine kinase-like ATPase, C-terminal domain"/>
    <property type="match status" value="1"/>
</dbReference>
<dbReference type="HAMAP" id="MF_00322">
    <property type="entry name" value="Top6B"/>
    <property type="match status" value="1"/>
</dbReference>
<dbReference type="InterPro" id="IPR036890">
    <property type="entry name" value="HATPase_C_sf"/>
</dbReference>
<dbReference type="InterPro" id="IPR020568">
    <property type="entry name" value="Ribosomal_Su5_D2-typ_SF"/>
</dbReference>
<dbReference type="InterPro" id="IPR014721">
    <property type="entry name" value="Ribsml_uS5_D2-typ_fold_subgr"/>
</dbReference>
<dbReference type="InterPro" id="IPR005734">
    <property type="entry name" value="TopoVI_B"/>
</dbReference>
<dbReference type="InterPro" id="IPR015320">
    <property type="entry name" value="TopoVI_B_transducer"/>
</dbReference>
<dbReference type="NCBIfam" id="NF003218">
    <property type="entry name" value="PRK04184.1"/>
    <property type="match status" value="1"/>
</dbReference>
<dbReference type="NCBIfam" id="TIGR01052">
    <property type="entry name" value="top6b"/>
    <property type="match status" value="1"/>
</dbReference>
<dbReference type="PANTHER" id="PTHR48444">
    <property type="entry name" value="DNA TOPOISOMERASE 6 SUBUNIT B"/>
    <property type="match status" value="1"/>
</dbReference>
<dbReference type="PANTHER" id="PTHR48444:SF1">
    <property type="entry name" value="DNA TOPOISOMERASE 6 SUBUNIT B"/>
    <property type="match status" value="1"/>
</dbReference>
<dbReference type="Pfam" id="PF02518">
    <property type="entry name" value="HATPase_c"/>
    <property type="match status" value="1"/>
</dbReference>
<dbReference type="Pfam" id="PF09239">
    <property type="entry name" value="Topo-VIb_trans"/>
    <property type="match status" value="1"/>
</dbReference>
<dbReference type="PIRSF" id="PIRSF006553">
    <property type="entry name" value="TopoVI_B"/>
    <property type="match status" value="1"/>
</dbReference>
<dbReference type="SMART" id="SM00387">
    <property type="entry name" value="HATPase_c"/>
    <property type="match status" value="1"/>
</dbReference>
<dbReference type="SUPFAM" id="SSF55874">
    <property type="entry name" value="ATPase domain of HSP90 chaperone/DNA topoisomerase II/histidine kinase"/>
    <property type="match status" value="1"/>
</dbReference>
<dbReference type="SUPFAM" id="SSF54211">
    <property type="entry name" value="Ribosomal protein S5 domain 2-like"/>
    <property type="match status" value="1"/>
</dbReference>
<comment type="function">
    <text evidence="1">Relaxes both positive and negative superturns and exhibits a strong decatenase activity.</text>
</comment>
<comment type="catalytic activity">
    <reaction evidence="1">
        <text>ATP-dependent breakage, passage and rejoining of double-stranded DNA.</text>
        <dbReference type="EC" id="5.6.2.2"/>
    </reaction>
</comment>
<comment type="subunit">
    <text evidence="1">Homodimer. Heterotetramer of two Top6A and two Top6B chains.</text>
</comment>
<comment type="similarity">
    <text evidence="1">Belongs to the TOP6B family.</text>
</comment>
<gene>
    <name evidence="1" type="primary">top6B</name>
    <name type="ordered locus">PYRAB05940</name>
    <name type="ORF">PAB0407</name>
</gene>
<name>TOP6B_PYRAB</name>
<feature type="chain" id="PRO_0000145465" description="Type 2 DNA topoisomerase 6 subunit B">
    <location>
        <begin position="1"/>
        <end position="564"/>
    </location>
</feature>
<feature type="binding site" evidence="1">
    <location>
        <position position="46"/>
    </location>
    <ligand>
        <name>ATP</name>
        <dbReference type="ChEBI" id="CHEBI:30616"/>
    </ligand>
</feature>
<feature type="binding site" evidence="1">
    <location>
        <position position="78"/>
    </location>
    <ligand>
        <name>ATP</name>
        <dbReference type="ChEBI" id="CHEBI:30616"/>
    </ligand>
</feature>
<feature type="binding site" evidence="1">
    <location>
        <begin position="99"/>
        <end position="100"/>
    </location>
    <ligand>
        <name>ATP</name>
        <dbReference type="ChEBI" id="CHEBI:30616"/>
    </ligand>
</feature>
<feature type="binding site" evidence="1">
    <location>
        <begin position="109"/>
        <end position="116"/>
    </location>
    <ligand>
        <name>ATP</name>
        <dbReference type="ChEBI" id="CHEBI:30616"/>
    </ligand>
</feature>
<feature type="binding site" evidence="1">
    <location>
        <position position="471"/>
    </location>
    <ligand>
        <name>ATP</name>
        <dbReference type="ChEBI" id="CHEBI:30616"/>
    </ligand>
</feature>
<accession>Q9V135</accession>
<accession>G8ZJ59</accession>